<gene>
    <name type="ORF">DDB_G0289975</name>
</gene>
<dbReference type="EMBL" id="AAFI02000149">
    <property type="protein sequence ID" value="EAL62500.1"/>
    <property type="molecule type" value="Genomic_DNA"/>
</dbReference>
<dbReference type="RefSeq" id="XP_635975.1">
    <property type="nucleotide sequence ID" value="XM_630883.1"/>
</dbReference>
<dbReference type="FunCoup" id="Q54GU4">
    <property type="interactions" value="640"/>
</dbReference>
<dbReference type="PaxDb" id="44689-DDB0266505"/>
<dbReference type="EnsemblProtists" id="EAL62500">
    <property type="protein sequence ID" value="EAL62500"/>
    <property type="gene ID" value="DDB_G0289975"/>
</dbReference>
<dbReference type="GeneID" id="8627390"/>
<dbReference type="KEGG" id="ddi:DDB_G0289975"/>
<dbReference type="dictyBase" id="DDB_G0289975"/>
<dbReference type="VEuPathDB" id="AmoebaDB:DDB_G0289975"/>
<dbReference type="eggNOG" id="ENOG502QPW5">
    <property type="taxonomic scope" value="Eukaryota"/>
</dbReference>
<dbReference type="HOGENOM" id="CLU_294137_0_0_1"/>
<dbReference type="InParanoid" id="Q54GU4"/>
<dbReference type="PRO" id="PR:Q54GU4"/>
<dbReference type="Proteomes" id="UP000002195">
    <property type="component" value="Chromosome 5"/>
</dbReference>
<dbReference type="InterPro" id="IPR051647">
    <property type="entry name" value="Mediator_comp_sub12"/>
</dbReference>
<dbReference type="PANTHER" id="PTHR46007:SF12">
    <property type="entry name" value="C2H2-TYPE DOMAIN-CONTAINING PROTEIN-RELATED"/>
    <property type="match status" value="1"/>
</dbReference>
<dbReference type="PANTHER" id="PTHR46007">
    <property type="entry name" value="MEDIATOR OF RNA POLYMERASE II TRANSCRIPTION SUBUNIT 12"/>
    <property type="match status" value="1"/>
</dbReference>
<sequence>MVPIFLKIFFYGFSTNKSKLSEGFQSEQSNNIIENNFHNLFHGNFNTNFLNNNNNNNNNNNNNNNNNNNNNNNNNNNNNNNNIIISSPILSASPSLSPRFQDILENNSVSINIQSSISESPPNSTDWQLEKFDDSMGMISSVISLREQQQQQQQQQQQQQQQQQQQQQQQQQQQQQQQNQQQINLQYQNLQEHCPQNQSHNQSHQQKQNNSTQIPLVQNNQQNLETFSISILDENFNNSGILSMFGEKCKKPKFPHSSIDQYQNLPSDIKMIVENISKMSNFSTQEEIVSVTFKFAFFLTNLSEKTLKILHDSISIFNKIEDLFFQIFLPQSNLIPEIYLKEYILNLFSHLCEREHFLVFNTLKLPLNFMFLCRSYFESFDRLDKIQQNQQLQIQQQNQQQNQQHYNNNNNNNNNNNNNNNNNNNNNNNNNNNNNNNNNNNNNNQQQQTHLQQQYHNYNNNFPITSINIQQQQQQLQPIDIQQLNINNSQNNQNNIQLEQPINHQNQNIYQQFQQFPNQVPSNQNLVGNDIFDTSIITIPQNNISSSQPSFLQQSPPLTHHPSSTQLVNNNLYQFDSNNQQQFQIHYTSPSFIGALASINNNNTTNNINFDNSGNTTTTTTTTTITTTTKTSNNHNSNDNVIINPNGSFLHTIPQEYRTKGSKINLSRKINKSPKGVISPKYRSILPRFGFKMKDLEERSNINGENYIRSRKGVATLINTYLTPISAEMSTKRESKCGVVICIKDHDQHSSVSIVPRLYPMSNGSKDGVEKFVFHKNVISIVCPGVFSHSYSVNRLDRNQRGFFIRYSFYMGKEEIDYVHTPIIRYKNTPSDFDQPSRVLLGHVISLHPVTQNGIVAVKFIAISNLLKKGLITKNITTSTSNLINNENNNENNNNYNGNINSNNNNNEEIEEEEENNNSSGGSSEDDDSDSKVKATRMGKPLEIILYEKNLQFHLTIPQHISKVNPEDKWRFPETLITETNDPKKSKNSSEIIHFVSSYLIEFACIIPRGNYEIIFRYENVNKTVHPIYYSI</sequence>
<organism>
    <name type="scientific">Dictyostelium discoideum</name>
    <name type="common">Social amoeba</name>
    <dbReference type="NCBI Taxonomy" id="44689"/>
    <lineage>
        <taxon>Eukaryota</taxon>
        <taxon>Amoebozoa</taxon>
        <taxon>Evosea</taxon>
        <taxon>Eumycetozoa</taxon>
        <taxon>Dictyostelia</taxon>
        <taxon>Dictyosteliales</taxon>
        <taxon>Dictyosteliaceae</taxon>
        <taxon>Dictyostelium</taxon>
    </lineage>
</organism>
<reference key="1">
    <citation type="journal article" date="2005" name="Nature">
        <title>The genome of the social amoeba Dictyostelium discoideum.</title>
        <authorList>
            <person name="Eichinger L."/>
            <person name="Pachebat J.A."/>
            <person name="Gloeckner G."/>
            <person name="Rajandream M.A."/>
            <person name="Sucgang R."/>
            <person name="Berriman M."/>
            <person name="Song J."/>
            <person name="Olsen R."/>
            <person name="Szafranski K."/>
            <person name="Xu Q."/>
            <person name="Tunggal B."/>
            <person name="Kummerfeld S."/>
            <person name="Madera M."/>
            <person name="Konfortov B.A."/>
            <person name="Rivero F."/>
            <person name="Bankier A.T."/>
            <person name="Lehmann R."/>
            <person name="Hamlin N."/>
            <person name="Davies R."/>
            <person name="Gaudet P."/>
            <person name="Fey P."/>
            <person name="Pilcher K."/>
            <person name="Chen G."/>
            <person name="Saunders D."/>
            <person name="Sodergren E.J."/>
            <person name="Davis P."/>
            <person name="Kerhornou A."/>
            <person name="Nie X."/>
            <person name="Hall N."/>
            <person name="Anjard C."/>
            <person name="Hemphill L."/>
            <person name="Bason N."/>
            <person name="Farbrother P."/>
            <person name="Desany B."/>
            <person name="Just E."/>
            <person name="Morio T."/>
            <person name="Rost R."/>
            <person name="Churcher C.M."/>
            <person name="Cooper J."/>
            <person name="Haydock S."/>
            <person name="van Driessche N."/>
            <person name="Cronin A."/>
            <person name="Goodhead I."/>
            <person name="Muzny D.M."/>
            <person name="Mourier T."/>
            <person name="Pain A."/>
            <person name="Lu M."/>
            <person name="Harper D."/>
            <person name="Lindsay R."/>
            <person name="Hauser H."/>
            <person name="James K.D."/>
            <person name="Quiles M."/>
            <person name="Madan Babu M."/>
            <person name="Saito T."/>
            <person name="Buchrieser C."/>
            <person name="Wardroper A."/>
            <person name="Felder M."/>
            <person name="Thangavelu M."/>
            <person name="Johnson D."/>
            <person name="Knights A."/>
            <person name="Loulseged H."/>
            <person name="Mungall K.L."/>
            <person name="Oliver K."/>
            <person name="Price C."/>
            <person name="Quail M.A."/>
            <person name="Urushihara H."/>
            <person name="Hernandez J."/>
            <person name="Rabbinowitsch E."/>
            <person name="Steffen D."/>
            <person name="Sanders M."/>
            <person name="Ma J."/>
            <person name="Kohara Y."/>
            <person name="Sharp S."/>
            <person name="Simmonds M.N."/>
            <person name="Spiegler S."/>
            <person name="Tivey A."/>
            <person name="Sugano S."/>
            <person name="White B."/>
            <person name="Walker D."/>
            <person name="Woodward J.R."/>
            <person name="Winckler T."/>
            <person name="Tanaka Y."/>
            <person name="Shaulsky G."/>
            <person name="Schleicher M."/>
            <person name="Weinstock G.M."/>
            <person name="Rosenthal A."/>
            <person name="Cox E.C."/>
            <person name="Chisholm R.L."/>
            <person name="Gibbs R.A."/>
            <person name="Loomis W.F."/>
            <person name="Platzer M."/>
            <person name="Kay R.R."/>
            <person name="Williams J.G."/>
            <person name="Dear P.H."/>
            <person name="Noegel A.A."/>
            <person name="Barrell B.G."/>
            <person name="Kuspa A."/>
        </authorList>
    </citation>
    <scope>NUCLEOTIDE SEQUENCE [LARGE SCALE GENOMIC DNA]</scope>
    <source>
        <strain>AX4</strain>
    </source>
</reference>
<keyword id="KW-1185">Reference proteome</keyword>
<feature type="chain" id="PRO_0000343635" description="Uncharacterized protein DDB_G0289975">
    <location>
        <begin position="1"/>
        <end position="1032"/>
    </location>
</feature>
<feature type="region of interest" description="Disordered" evidence="1">
    <location>
        <begin position="54"/>
        <end position="80"/>
    </location>
</feature>
<feature type="region of interest" description="Disordered" evidence="1">
    <location>
        <begin position="391"/>
        <end position="451"/>
    </location>
</feature>
<feature type="region of interest" description="Disordered" evidence="1">
    <location>
        <begin position="884"/>
        <end position="934"/>
    </location>
</feature>
<feature type="compositionally biased region" description="Low complexity" evidence="1">
    <location>
        <begin position="884"/>
        <end position="907"/>
    </location>
</feature>
<name>Y6505_DICDI</name>
<protein>
    <recommendedName>
        <fullName>Uncharacterized protein DDB_G0289975</fullName>
    </recommendedName>
</protein>
<accession>Q54GU4</accession>
<evidence type="ECO:0000256" key="1">
    <source>
        <dbReference type="SAM" id="MobiDB-lite"/>
    </source>
</evidence>
<proteinExistence type="predicted"/>